<gene>
    <name evidence="1" type="primary">thrB</name>
    <name type="ordered locus">YN1551_2770</name>
</gene>
<comment type="function">
    <text evidence="1">Catalyzes the ATP-dependent phosphorylation of L-homoserine to L-homoserine phosphate.</text>
</comment>
<comment type="catalytic activity">
    <reaction evidence="1">
        <text>L-homoserine + ATP = O-phospho-L-homoserine + ADP + H(+)</text>
        <dbReference type="Rhea" id="RHEA:13985"/>
        <dbReference type="ChEBI" id="CHEBI:15378"/>
        <dbReference type="ChEBI" id="CHEBI:30616"/>
        <dbReference type="ChEBI" id="CHEBI:57476"/>
        <dbReference type="ChEBI" id="CHEBI:57590"/>
        <dbReference type="ChEBI" id="CHEBI:456216"/>
        <dbReference type="EC" id="2.7.1.39"/>
    </reaction>
</comment>
<comment type="pathway">
    <text evidence="1">Amino-acid biosynthesis; L-threonine biosynthesis; L-threonine from L-aspartate: step 4/5.</text>
</comment>
<comment type="subcellular location">
    <subcellularLocation>
        <location evidence="1">Cytoplasm</location>
    </subcellularLocation>
</comment>
<comment type="similarity">
    <text evidence="1">Belongs to the GHMP kinase family. Homoserine kinase subfamily.</text>
</comment>
<keyword id="KW-0028">Amino-acid biosynthesis</keyword>
<keyword id="KW-0067">ATP-binding</keyword>
<keyword id="KW-0963">Cytoplasm</keyword>
<keyword id="KW-0418">Kinase</keyword>
<keyword id="KW-0547">Nucleotide-binding</keyword>
<keyword id="KW-0791">Threonine biosynthesis</keyword>
<keyword id="KW-0808">Transferase</keyword>
<proteinExistence type="inferred from homology"/>
<evidence type="ECO:0000255" key="1">
    <source>
        <dbReference type="HAMAP-Rule" id="MF_00384"/>
    </source>
</evidence>
<feature type="chain" id="PRO_1000205745" description="Homoserine kinase">
    <location>
        <begin position="1"/>
        <end position="311"/>
    </location>
</feature>
<feature type="binding site" evidence="1">
    <location>
        <begin position="88"/>
        <end position="98"/>
    </location>
    <ligand>
        <name>ATP</name>
        <dbReference type="ChEBI" id="CHEBI:30616"/>
    </ligand>
</feature>
<name>KHSE_SACI1</name>
<sequence length="311" mass="33901">MECKRARAYSSSANLGSGFDILSMAHTAFFDTVEICVETKNSENIVIESNSKIPLEPNRNSATYPLVRIMEERGIKASLRVKVIKGIPEGLGLGSSGASATAAVMAFSSLFNLNLSKEDLVRYAMYGEIASSGSPHPDNVAASVFGGVVSVVSVNPVKVVEIPLNYSFNILLFVPLNIHIEEKTKKAREMVPKTVKLSDYINNSRYISSLLIGFVKGERDLIRLGLNDEIVEKARLPLFPYYPKIKEIAIKYDAVGSCVSGAGPSILVLTDKMTDENKIAEEGTKTCNEFNVECEVIKAKIAGGVEVERRN</sequence>
<accession>C3NM92</accession>
<organism>
    <name type="scientific">Saccharolobus islandicus (strain Y.N.15.51 / Yellowstone #2)</name>
    <name type="common">Sulfolobus islandicus</name>
    <dbReference type="NCBI Taxonomy" id="419942"/>
    <lineage>
        <taxon>Archaea</taxon>
        <taxon>Thermoproteota</taxon>
        <taxon>Thermoprotei</taxon>
        <taxon>Sulfolobales</taxon>
        <taxon>Sulfolobaceae</taxon>
        <taxon>Saccharolobus</taxon>
    </lineage>
</organism>
<dbReference type="EC" id="2.7.1.39" evidence="1"/>
<dbReference type="EMBL" id="CP001404">
    <property type="protein sequence ID" value="ACP49674.1"/>
    <property type="molecule type" value="Genomic_DNA"/>
</dbReference>
<dbReference type="RefSeq" id="WP_012715452.1">
    <property type="nucleotide sequence ID" value="NC_012623.1"/>
</dbReference>
<dbReference type="SMR" id="C3NM92"/>
<dbReference type="GeneID" id="7810722"/>
<dbReference type="KEGG" id="sin:YN1551_2770"/>
<dbReference type="HOGENOM" id="CLU_041243_1_1_2"/>
<dbReference type="UniPathway" id="UPA00050">
    <property type="reaction ID" value="UER00064"/>
</dbReference>
<dbReference type="Proteomes" id="UP000006818">
    <property type="component" value="Chromosome"/>
</dbReference>
<dbReference type="GO" id="GO:0005737">
    <property type="term" value="C:cytoplasm"/>
    <property type="evidence" value="ECO:0007669"/>
    <property type="project" value="UniProtKB-SubCell"/>
</dbReference>
<dbReference type="GO" id="GO:0005524">
    <property type="term" value="F:ATP binding"/>
    <property type="evidence" value="ECO:0007669"/>
    <property type="project" value="UniProtKB-UniRule"/>
</dbReference>
<dbReference type="GO" id="GO:0004413">
    <property type="term" value="F:homoserine kinase activity"/>
    <property type="evidence" value="ECO:0007669"/>
    <property type="project" value="UniProtKB-UniRule"/>
</dbReference>
<dbReference type="GO" id="GO:0009088">
    <property type="term" value="P:threonine biosynthetic process"/>
    <property type="evidence" value="ECO:0007669"/>
    <property type="project" value="UniProtKB-UniRule"/>
</dbReference>
<dbReference type="Gene3D" id="3.30.230.10">
    <property type="match status" value="1"/>
</dbReference>
<dbReference type="Gene3D" id="3.30.70.890">
    <property type="entry name" value="GHMP kinase, C-terminal domain"/>
    <property type="match status" value="1"/>
</dbReference>
<dbReference type="HAMAP" id="MF_00384">
    <property type="entry name" value="Homoser_kinase"/>
    <property type="match status" value="1"/>
</dbReference>
<dbReference type="InterPro" id="IPR013750">
    <property type="entry name" value="GHMP_kinase_C_dom"/>
</dbReference>
<dbReference type="InterPro" id="IPR036554">
    <property type="entry name" value="GHMP_kinase_C_sf"/>
</dbReference>
<dbReference type="InterPro" id="IPR006204">
    <property type="entry name" value="GHMP_kinase_N_dom"/>
</dbReference>
<dbReference type="InterPro" id="IPR006203">
    <property type="entry name" value="GHMP_knse_ATP-bd_CS"/>
</dbReference>
<dbReference type="InterPro" id="IPR000870">
    <property type="entry name" value="Homoserine_kinase"/>
</dbReference>
<dbReference type="InterPro" id="IPR020568">
    <property type="entry name" value="Ribosomal_Su5_D2-typ_SF"/>
</dbReference>
<dbReference type="InterPro" id="IPR014721">
    <property type="entry name" value="Ribsml_uS5_D2-typ_fold_subgr"/>
</dbReference>
<dbReference type="NCBIfam" id="NF002288">
    <property type="entry name" value="PRK01212.1-4"/>
    <property type="match status" value="1"/>
</dbReference>
<dbReference type="NCBIfam" id="TIGR00191">
    <property type="entry name" value="thrB"/>
    <property type="match status" value="1"/>
</dbReference>
<dbReference type="PANTHER" id="PTHR20861:SF1">
    <property type="entry name" value="HOMOSERINE KINASE"/>
    <property type="match status" value="1"/>
</dbReference>
<dbReference type="PANTHER" id="PTHR20861">
    <property type="entry name" value="HOMOSERINE/4-DIPHOSPHOCYTIDYL-2-C-METHYL-D-ERYTHRITOL KINASE"/>
    <property type="match status" value="1"/>
</dbReference>
<dbReference type="Pfam" id="PF08544">
    <property type="entry name" value="GHMP_kinases_C"/>
    <property type="match status" value="1"/>
</dbReference>
<dbReference type="Pfam" id="PF00288">
    <property type="entry name" value="GHMP_kinases_N"/>
    <property type="match status" value="1"/>
</dbReference>
<dbReference type="PIRSF" id="PIRSF000676">
    <property type="entry name" value="Homoser_kin"/>
    <property type="match status" value="1"/>
</dbReference>
<dbReference type="PRINTS" id="PR00958">
    <property type="entry name" value="HOMSERKINASE"/>
</dbReference>
<dbReference type="SUPFAM" id="SSF55060">
    <property type="entry name" value="GHMP Kinase, C-terminal domain"/>
    <property type="match status" value="1"/>
</dbReference>
<dbReference type="SUPFAM" id="SSF54211">
    <property type="entry name" value="Ribosomal protein S5 domain 2-like"/>
    <property type="match status" value="1"/>
</dbReference>
<dbReference type="PROSITE" id="PS00627">
    <property type="entry name" value="GHMP_KINASES_ATP"/>
    <property type="match status" value="1"/>
</dbReference>
<reference key="1">
    <citation type="journal article" date="2009" name="Proc. Natl. Acad. Sci. U.S.A.">
        <title>Biogeography of the Sulfolobus islandicus pan-genome.</title>
        <authorList>
            <person name="Reno M.L."/>
            <person name="Held N.L."/>
            <person name="Fields C.J."/>
            <person name="Burke P.V."/>
            <person name="Whitaker R.J."/>
        </authorList>
    </citation>
    <scope>NUCLEOTIDE SEQUENCE [LARGE SCALE GENOMIC DNA]</scope>
    <source>
        <strain>Y.N.15.51 / Yellowstone #2</strain>
    </source>
</reference>
<protein>
    <recommendedName>
        <fullName evidence="1">Homoserine kinase</fullName>
        <shortName evidence="1">HK</shortName>
        <shortName evidence="1">HSK</shortName>
        <ecNumber evidence="1">2.7.1.39</ecNumber>
    </recommendedName>
</protein>